<dbReference type="EC" id="3.5.1.53"/>
<dbReference type="EMBL" id="AB062681">
    <property type="protein sequence ID" value="BAB59126.1"/>
    <property type="molecule type" value="mRNA"/>
</dbReference>
<dbReference type="EMBL" id="AP005110">
    <property type="protein sequence ID" value="BAD28433.1"/>
    <property type="molecule type" value="Genomic_DNA"/>
</dbReference>
<dbReference type="EMBL" id="AP005798">
    <property type="protein sequence ID" value="BAD29288.1"/>
    <property type="molecule type" value="Genomic_DNA"/>
</dbReference>
<dbReference type="EMBL" id="AP008208">
    <property type="protein sequence ID" value="BAF08947.1"/>
    <property type="molecule type" value="Genomic_DNA"/>
</dbReference>
<dbReference type="EMBL" id="AP014958">
    <property type="protein sequence ID" value="BAS79051.1"/>
    <property type="molecule type" value="Genomic_DNA"/>
</dbReference>
<dbReference type="EMBL" id="AK061722">
    <property type="protein sequence ID" value="BAG88068.1"/>
    <property type="molecule type" value="mRNA"/>
</dbReference>
<dbReference type="EMBL" id="AK106147">
    <property type="protein sequence ID" value="BAG97599.1"/>
    <property type="molecule type" value="mRNA"/>
</dbReference>
<dbReference type="RefSeq" id="XP_015625266.1">
    <property type="nucleotide sequence ID" value="XM_015769780.1"/>
</dbReference>
<dbReference type="SMR" id="Q93XI4"/>
<dbReference type="FunCoup" id="Q93XI4">
    <property type="interactions" value="298"/>
</dbReference>
<dbReference type="STRING" id="39947.Q93XI4"/>
<dbReference type="PaxDb" id="39947-Q93XI4"/>
<dbReference type="EnsemblPlants" id="Os02t0533900-01">
    <property type="protein sequence ID" value="Os02t0533900-01"/>
    <property type="gene ID" value="Os02g0533900"/>
</dbReference>
<dbReference type="EnsemblPlants" id="Os02t0533900-02">
    <property type="protein sequence ID" value="Os02t0533900-02"/>
    <property type="gene ID" value="Os02g0533900"/>
</dbReference>
<dbReference type="Gramene" id="Os02t0533900-01">
    <property type="protein sequence ID" value="Os02t0533900-01"/>
    <property type="gene ID" value="Os02g0533900"/>
</dbReference>
<dbReference type="Gramene" id="Os02t0533900-02">
    <property type="protein sequence ID" value="Os02t0533900-02"/>
    <property type="gene ID" value="Os02g0533900"/>
</dbReference>
<dbReference type="KEGG" id="dosa:Os02g0533900"/>
<dbReference type="eggNOG" id="KOG0806">
    <property type="taxonomic scope" value="Eukaryota"/>
</dbReference>
<dbReference type="HOGENOM" id="CLU_030130_4_0_1"/>
<dbReference type="InParanoid" id="Q93XI4"/>
<dbReference type="OMA" id="APYFCQV"/>
<dbReference type="OrthoDB" id="412018at2759"/>
<dbReference type="PlantReactome" id="R-OSA-1119304">
    <property type="pathway name" value="Putrescine biosynthesis II"/>
</dbReference>
<dbReference type="UniPathway" id="UPA00534">
    <property type="reaction ID" value="UER00286"/>
</dbReference>
<dbReference type="Proteomes" id="UP000000763">
    <property type="component" value="Chromosome 2"/>
</dbReference>
<dbReference type="Proteomes" id="UP000059680">
    <property type="component" value="Chromosome 2"/>
</dbReference>
<dbReference type="GO" id="GO:0050126">
    <property type="term" value="F:N-carbamoylputrescine amidase activity"/>
    <property type="evidence" value="ECO:0000318"/>
    <property type="project" value="GO_Central"/>
</dbReference>
<dbReference type="GO" id="GO:0033388">
    <property type="term" value="P:putrescine biosynthetic process from arginine"/>
    <property type="evidence" value="ECO:0000318"/>
    <property type="project" value="GO_Central"/>
</dbReference>
<dbReference type="CDD" id="cd07573">
    <property type="entry name" value="CPA"/>
    <property type="match status" value="1"/>
</dbReference>
<dbReference type="FunFam" id="3.60.110.10:FF:000012">
    <property type="entry name" value="N-carbamoylputrescine amidohydrolase, putative"/>
    <property type="match status" value="1"/>
</dbReference>
<dbReference type="Gene3D" id="3.60.110.10">
    <property type="entry name" value="Carbon-nitrogen hydrolase"/>
    <property type="match status" value="1"/>
</dbReference>
<dbReference type="InterPro" id="IPR050345">
    <property type="entry name" value="Aliph_Amidase/BUP"/>
</dbReference>
<dbReference type="InterPro" id="IPR003010">
    <property type="entry name" value="C-N_Hydrolase"/>
</dbReference>
<dbReference type="InterPro" id="IPR036526">
    <property type="entry name" value="C-N_Hydrolase_sf"/>
</dbReference>
<dbReference type="InterPro" id="IPR017755">
    <property type="entry name" value="N-carbamoylputrescine_amidase"/>
</dbReference>
<dbReference type="NCBIfam" id="TIGR03381">
    <property type="entry name" value="agmatine_aguB"/>
    <property type="match status" value="1"/>
</dbReference>
<dbReference type="PANTHER" id="PTHR43674:SF2">
    <property type="entry name" value="BETA-UREIDOPROPIONASE"/>
    <property type="match status" value="1"/>
</dbReference>
<dbReference type="PANTHER" id="PTHR43674">
    <property type="entry name" value="NITRILASE C965.09-RELATED"/>
    <property type="match status" value="1"/>
</dbReference>
<dbReference type="Pfam" id="PF00795">
    <property type="entry name" value="CN_hydrolase"/>
    <property type="match status" value="1"/>
</dbReference>
<dbReference type="SUPFAM" id="SSF56317">
    <property type="entry name" value="Carbon-nitrogen hydrolase"/>
    <property type="match status" value="1"/>
</dbReference>
<dbReference type="PROSITE" id="PS50263">
    <property type="entry name" value="CN_HYDROLASE"/>
    <property type="match status" value="1"/>
</dbReference>
<evidence type="ECO:0000250" key="1"/>
<evidence type="ECO:0000255" key="2">
    <source>
        <dbReference type="PROSITE-ProRule" id="PRU00054"/>
    </source>
</evidence>
<evidence type="ECO:0000305" key="3"/>
<keyword id="KW-0378">Hydrolase</keyword>
<keyword id="KW-0620">Polyamine biosynthesis</keyword>
<keyword id="KW-1185">Reference proteome</keyword>
<feature type="chain" id="PRO_0000261602" description="N-carbamoylputrescine amidase">
    <location>
        <begin position="1"/>
        <end position="301"/>
    </location>
</feature>
<feature type="domain" description="CN hydrolase" evidence="2">
    <location>
        <begin position="11"/>
        <end position="269"/>
    </location>
</feature>
<feature type="active site" description="Proton acceptor" evidence="2">
    <location>
        <position position="50"/>
    </location>
</feature>
<feature type="active site" description="Proton donor" evidence="2">
    <location>
        <position position="123"/>
    </location>
</feature>
<feature type="active site" description="Nucleophile" evidence="2">
    <location>
        <position position="160"/>
    </location>
</feature>
<sequence>MAGGGGAGSKVSVAAVQFACTDVESENVDTAERLIREAHKKGANIVLVQELFEGQYFCQAQRLDFFQRAKPYKGNPTIIRFQKLAKELEVVIPVSFFEEANNAHYNSVAIIDADGTDLGLYRKSHIPDGPGYQEKFYFNPGDTGFKAFKTKYATIGVGICWDQWFPECARAMVLQGAEILFYPTAIGSEPQDNNLDSREHWKRVMQGHAGANLVPLVASNRIGRETVETEHGESTITFFGNSFIAGPTGEIVKLANDKDEDVLVAEFDLDEIKSTRHGWGIFRDRRPDLYKVLLTLDGEKS</sequence>
<reference key="1">
    <citation type="submission" date="2001-06" db="EMBL/GenBank/DDBJ databases">
        <title>Rice cDNA encoding a putative carbon-nitrogen hydrolase of the beta-alnine synthase/nitrilase family.</title>
        <authorList>
            <person name="Kimura K."/>
            <person name="Nakada Y."/>
            <person name="Itoh Y."/>
        </authorList>
    </citation>
    <scope>NUCLEOTIDE SEQUENCE [MRNA]</scope>
    <source>
        <strain>cv. Nipponbare</strain>
        <tissue>Leaf</tissue>
    </source>
</reference>
<reference key="2">
    <citation type="journal article" date="2005" name="Nature">
        <title>The map-based sequence of the rice genome.</title>
        <authorList>
            <consortium name="International rice genome sequencing project (IRGSP)"/>
        </authorList>
    </citation>
    <scope>NUCLEOTIDE SEQUENCE [LARGE SCALE GENOMIC DNA]</scope>
    <source>
        <strain>cv. Nipponbare</strain>
    </source>
</reference>
<reference key="3">
    <citation type="journal article" date="2008" name="Nucleic Acids Res.">
        <title>The rice annotation project database (RAP-DB): 2008 update.</title>
        <authorList>
            <consortium name="The rice annotation project (RAP)"/>
        </authorList>
    </citation>
    <scope>GENOME REANNOTATION</scope>
    <source>
        <strain>cv. Nipponbare</strain>
    </source>
</reference>
<reference key="4">
    <citation type="journal article" date="2013" name="Rice">
        <title>Improvement of the Oryza sativa Nipponbare reference genome using next generation sequence and optical map data.</title>
        <authorList>
            <person name="Kawahara Y."/>
            <person name="de la Bastide M."/>
            <person name="Hamilton J.P."/>
            <person name="Kanamori H."/>
            <person name="McCombie W.R."/>
            <person name="Ouyang S."/>
            <person name="Schwartz D.C."/>
            <person name="Tanaka T."/>
            <person name="Wu J."/>
            <person name="Zhou S."/>
            <person name="Childs K.L."/>
            <person name="Davidson R.M."/>
            <person name="Lin H."/>
            <person name="Quesada-Ocampo L."/>
            <person name="Vaillancourt B."/>
            <person name="Sakai H."/>
            <person name="Lee S.S."/>
            <person name="Kim J."/>
            <person name="Numa H."/>
            <person name="Itoh T."/>
            <person name="Buell C.R."/>
            <person name="Matsumoto T."/>
        </authorList>
    </citation>
    <scope>GENOME REANNOTATION</scope>
    <source>
        <strain>cv. Nipponbare</strain>
    </source>
</reference>
<reference key="5">
    <citation type="journal article" date="2003" name="Science">
        <title>Collection, mapping, and annotation of over 28,000 cDNA clones from japonica rice.</title>
        <authorList>
            <consortium name="The rice full-length cDNA consortium"/>
        </authorList>
    </citation>
    <scope>NUCLEOTIDE SEQUENCE [LARGE SCALE MRNA]</scope>
    <source>
        <strain>cv. Nipponbare</strain>
    </source>
</reference>
<organism>
    <name type="scientific">Oryza sativa subsp. japonica</name>
    <name type="common">Rice</name>
    <dbReference type="NCBI Taxonomy" id="39947"/>
    <lineage>
        <taxon>Eukaryota</taxon>
        <taxon>Viridiplantae</taxon>
        <taxon>Streptophyta</taxon>
        <taxon>Embryophyta</taxon>
        <taxon>Tracheophyta</taxon>
        <taxon>Spermatophyta</taxon>
        <taxon>Magnoliopsida</taxon>
        <taxon>Liliopsida</taxon>
        <taxon>Poales</taxon>
        <taxon>Poaceae</taxon>
        <taxon>BOP clade</taxon>
        <taxon>Oryzoideae</taxon>
        <taxon>Oryzeae</taxon>
        <taxon>Oryzinae</taxon>
        <taxon>Oryza</taxon>
        <taxon>Oryza sativa</taxon>
    </lineage>
</organism>
<comment type="function">
    <text evidence="1">Involved in polyamine biosynthesis.</text>
</comment>
<comment type="catalytic activity">
    <reaction>
        <text>N-carbamoylputrescine + H2O + 2 H(+) = putrescine + NH4(+) + CO2</text>
        <dbReference type="Rhea" id="RHEA:22284"/>
        <dbReference type="ChEBI" id="CHEBI:15377"/>
        <dbReference type="ChEBI" id="CHEBI:15378"/>
        <dbReference type="ChEBI" id="CHEBI:16526"/>
        <dbReference type="ChEBI" id="CHEBI:28938"/>
        <dbReference type="ChEBI" id="CHEBI:58318"/>
        <dbReference type="ChEBI" id="CHEBI:326268"/>
        <dbReference type="EC" id="3.5.1.53"/>
    </reaction>
</comment>
<comment type="pathway">
    <text>Amine and polyamine biosynthesis; putrescine biosynthesis via agmatine pathway; putrescine from N-carbamoylputrescine (amidase route): step 1/1.</text>
</comment>
<comment type="subunit">
    <text evidence="1">Homooctamer.</text>
</comment>
<comment type="similarity">
    <text evidence="3">Belongs to the carbon-nitrogen hydrolase superfamily.</text>
</comment>
<accession>Q93XI4</accession>
<accession>B7E6S1</accession>
<gene>
    <name type="primary">CPA</name>
    <name type="ordered locus">Os02g0533900</name>
    <name type="ordered locus">LOC_Os02g33080</name>
    <name type="ORF">B1136H02.7</name>
    <name type="ORF">P0605D08.40</name>
</gene>
<proteinExistence type="evidence at transcript level"/>
<protein>
    <recommendedName>
        <fullName>N-carbamoylputrescine amidase</fullName>
        <ecNumber>3.5.1.53</ecNumber>
    </recommendedName>
</protein>
<name>AGUB_ORYSJ</name>